<keyword id="KW-0067">ATP-binding</keyword>
<keyword id="KW-0133">Cell shape</keyword>
<keyword id="KW-0961">Cell wall biogenesis/degradation</keyword>
<keyword id="KW-0963">Cytoplasm</keyword>
<keyword id="KW-0436">Ligase</keyword>
<keyword id="KW-0460">Magnesium</keyword>
<keyword id="KW-0464">Manganese</keyword>
<keyword id="KW-0479">Metal-binding</keyword>
<keyword id="KW-0547">Nucleotide-binding</keyword>
<keyword id="KW-0573">Peptidoglycan synthesis</keyword>
<keyword id="KW-1185">Reference proteome</keyword>
<sequence length="304" mass="33710">MNIVVLFGGTSPEREISLKSGENIAATLRARGHQVETLDTAVPNFVEQLMQLKPDCVFPALHGADGEDGKIQGLLSILHIPYVGSDVRASVITMDKYLTKLVALQSGIPTPSFIYVYDPHLVPDYWDVERKLGSPFIVKPCDVGSTIGLSLVRSASEYEVALEEAFRFSDRLLLEEFIDGFEVTVGLFRLGGDFLVLPPIYVVKPDRIFDYDTKYKPGGAKHVYDLPISVEARERLTSYSKRICKIVGIGGVARLDYIVKDETPYLLEINSIPGMTAESLVPDEVRHAGRDFGEFLEDLIKDAL</sequence>
<reference key="1">
    <citation type="submission" date="2008-08" db="EMBL/GenBank/DDBJ databases">
        <title>The complete genome sequence of Coprothermobacter proteolyticus strain ATCC 5245 / DSM 5265 / BT.</title>
        <authorList>
            <person name="Dodson R.J."/>
            <person name="Durkin A.S."/>
            <person name="Wu M."/>
            <person name="Eisen J."/>
            <person name="Sutton G."/>
        </authorList>
    </citation>
    <scope>NUCLEOTIDE SEQUENCE [LARGE SCALE GENOMIC DNA]</scope>
    <source>
        <strain>ATCC 35245 / DSM 5265 / OCM 4 / BT</strain>
    </source>
</reference>
<organism>
    <name type="scientific">Coprothermobacter proteolyticus (strain ATCC 35245 / DSM 5265 / OCM 4 / BT)</name>
    <dbReference type="NCBI Taxonomy" id="309798"/>
    <lineage>
        <taxon>Bacteria</taxon>
        <taxon>Pseudomonadati</taxon>
        <taxon>Coprothermobacterota</taxon>
        <taxon>Coprothermobacteria</taxon>
        <taxon>Coprothermobacterales</taxon>
        <taxon>Coprothermobacteraceae</taxon>
        <taxon>Coprothermobacter</taxon>
    </lineage>
</organism>
<gene>
    <name evidence="2" type="primary">ddl</name>
    <name type="ordered locus">COPRO5265_0677</name>
</gene>
<proteinExistence type="inferred from homology"/>
<feature type="chain" id="PRO_1000116635" description="D-alanine--D-alanine ligase">
    <location>
        <begin position="1"/>
        <end position="304"/>
    </location>
</feature>
<feature type="domain" description="ATP-grasp" evidence="2">
    <location>
        <begin position="100"/>
        <end position="301"/>
    </location>
</feature>
<feature type="binding site" evidence="2">
    <location>
        <begin position="129"/>
        <end position="184"/>
    </location>
    <ligand>
        <name>ATP</name>
        <dbReference type="ChEBI" id="CHEBI:30616"/>
    </ligand>
</feature>
<feature type="binding site" evidence="2">
    <location>
        <position position="256"/>
    </location>
    <ligand>
        <name>Mg(2+)</name>
        <dbReference type="ChEBI" id="CHEBI:18420"/>
        <label>1</label>
    </ligand>
</feature>
<feature type="binding site" evidence="2">
    <location>
        <position position="268"/>
    </location>
    <ligand>
        <name>Mg(2+)</name>
        <dbReference type="ChEBI" id="CHEBI:18420"/>
        <label>1</label>
    </ligand>
</feature>
<feature type="binding site" evidence="2">
    <location>
        <position position="268"/>
    </location>
    <ligand>
        <name>Mg(2+)</name>
        <dbReference type="ChEBI" id="CHEBI:18420"/>
        <label>2</label>
    </ligand>
</feature>
<feature type="binding site" evidence="2">
    <location>
        <position position="270"/>
    </location>
    <ligand>
        <name>Mg(2+)</name>
        <dbReference type="ChEBI" id="CHEBI:18420"/>
        <label>2</label>
    </ligand>
</feature>
<evidence type="ECO:0000250" key="1"/>
<evidence type="ECO:0000255" key="2">
    <source>
        <dbReference type="HAMAP-Rule" id="MF_00047"/>
    </source>
</evidence>
<name>DDL_COPPD</name>
<protein>
    <recommendedName>
        <fullName evidence="2">D-alanine--D-alanine ligase</fullName>
        <ecNumber evidence="2">6.3.2.4</ecNumber>
    </recommendedName>
    <alternativeName>
        <fullName evidence="2">D-Ala-D-Ala ligase</fullName>
    </alternativeName>
    <alternativeName>
        <fullName evidence="2">D-alanylalanine synthetase</fullName>
    </alternativeName>
</protein>
<accession>B5Y8C8</accession>
<comment type="function">
    <text evidence="2">Cell wall formation.</text>
</comment>
<comment type="catalytic activity">
    <reaction evidence="2">
        <text>2 D-alanine + ATP = D-alanyl-D-alanine + ADP + phosphate + H(+)</text>
        <dbReference type="Rhea" id="RHEA:11224"/>
        <dbReference type="ChEBI" id="CHEBI:15378"/>
        <dbReference type="ChEBI" id="CHEBI:30616"/>
        <dbReference type="ChEBI" id="CHEBI:43474"/>
        <dbReference type="ChEBI" id="CHEBI:57416"/>
        <dbReference type="ChEBI" id="CHEBI:57822"/>
        <dbReference type="ChEBI" id="CHEBI:456216"/>
        <dbReference type="EC" id="6.3.2.4"/>
    </reaction>
</comment>
<comment type="cofactor">
    <cofactor evidence="1">
        <name>Mg(2+)</name>
        <dbReference type="ChEBI" id="CHEBI:18420"/>
    </cofactor>
    <cofactor evidence="1">
        <name>Mn(2+)</name>
        <dbReference type="ChEBI" id="CHEBI:29035"/>
    </cofactor>
    <text evidence="1">Binds 2 magnesium or manganese ions per subunit.</text>
</comment>
<comment type="pathway">
    <text evidence="2">Cell wall biogenesis; peptidoglycan biosynthesis.</text>
</comment>
<comment type="subcellular location">
    <subcellularLocation>
        <location evidence="2">Cytoplasm</location>
    </subcellularLocation>
</comment>
<comment type="similarity">
    <text evidence="2">Belongs to the D-alanine--D-alanine ligase family.</text>
</comment>
<dbReference type="EC" id="6.3.2.4" evidence="2"/>
<dbReference type="EMBL" id="CP001145">
    <property type="protein sequence ID" value="ACI17873.1"/>
    <property type="molecule type" value="Genomic_DNA"/>
</dbReference>
<dbReference type="RefSeq" id="WP_012544524.1">
    <property type="nucleotide sequence ID" value="NC_011295.1"/>
</dbReference>
<dbReference type="SMR" id="B5Y8C8"/>
<dbReference type="STRING" id="309798.COPRO5265_0677"/>
<dbReference type="KEGG" id="cpo:COPRO5265_0677"/>
<dbReference type="eggNOG" id="COG1181">
    <property type="taxonomic scope" value="Bacteria"/>
</dbReference>
<dbReference type="HOGENOM" id="CLU_039268_1_1_9"/>
<dbReference type="OrthoDB" id="9813261at2"/>
<dbReference type="UniPathway" id="UPA00219"/>
<dbReference type="Proteomes" id="UP000001732">
    <property type="component" value="Chromosome"/>
</dbReference>
<dbReference type="GO" id="GO:0005737">
    <property type="term" value="C:cytoplasm"/>
    <property type="evidence" value="ECO:0007669"/>
    <property type="project" value="UniProtKB-SubCell"/>
</dbReference>
<dbReference type="GO" id="GO:0005524">
    <property type="term" value="F:ATP binding"/>
    <property type="evidence" value="ECO:0007669"/>
    <property type="project" value="UniProtKB-KW"/>
</dbReference>
<dbReference type="GO" id="GO:0008716">
    <property type="term" value="F:D-alanine-D-alanine ligase activity"/>
    <property type="evidence" value="ECO:0007669"/>
    <property type="project" value="UniProtKB-UniRule"/>
</dbReference>
<dbReference type="GO" id="GO:0046872">
    <property type="term" value="F:metal ion binding"/>
    <property type="evidence" value="ECO:0007669"/>
    <property type="project" value="UniProtKB-KW"/>
</dbReference>
<dbReference type="GO" id="GO:0071555">
    <property type="term" value="P:cell wall organization"/>
    <property type="evidence" value="ECO:0007669"/>
    <property type="project" value="UniProtKB-KW"/>
</dbReference>
<dbReference type="GO" id="GO:0009252">
    <property type="term" value="P:peptidoglycan biosynthetic process"/>
    <property type="evidence" value="ECO:0007669"/>
    <property type="project" value="UniProtKB-UniRule"/>
</dbReference>
<dbReference type="GO" id="GO:0008360">
    <property type="term" value="P:regulation of cell shape"/>
    <property type="evidence" value="ECO:0007669"/>
    <property type="project" value="UniProtKB-KW"/>
</dbReference>
<dbReference type="Gene3D" id="3.40.50.20">
    <property type="match status" value="1"/>
</dbReference>
<dbReference type="Gene3D" id="3.30.1490.20">
    <property type="entry name" value="ATP-grasp fold, A domain"/>
    <property type="match status" value="1"/>
</dbReference>
<dbReference type="Gene3D" id="3.30.470.20">
    <property type="entry name" value="ATP-grasp fold, B domain"/>
    <property type="match status" value="1"/>
</dbReference>
<dbReference type="HAMAP" id="MF_00047">
    <property type="entry name" value="Dala_Dala_lig"/>
    <property type="match status" value="1"/>
</dbReference>
<dbReference type="InterPro" id="IPR011761">
    <property type="entry name" value="ATP-grasp"/>
</dbReference>
<dbReference type="InterPro" id="IPR013815">
    <property type="entry name" value="ATP_grasp_subdomain_1"/>
</dbReference>
<dbReference type="InterPro" id="IPR000291">
    <property type="entry name" value="D-Ala_lig_Van_CS"/>
</dbReference>
<dbReference type="InterPro" id="IPR005905">
    <property type="entry name" value="D_ala_D_ala"/>
</dbReference>
<dbReference type="InterPro" id="IPR011095">
    <property type="entry name" value="Dala_Dala_lig_C"/>
</dbReference>
<dbReference type="InterPro" id="IPR011127">
    <property type="entry name" value="Dala_Dala_lig_N"/>
</dbReference>
<dbReference type="InterPro" id="IPR016185">
    <property type="entry name" value="PreATP-grasp_dom_sf"/>
</dbReference>
<dbReference type="NCBIfam" id="TIGR01205">
    <property type="entry name" value="D_ala_D_alaTIGR"/>
    <property type="match status" value="1"/>
</dbReference>
<dbReference type="NCBIfam" id="NF002378">
    <property type="entry name" value="PRK01372.1"/>
    <property type="match status" value="1"/>
</dbReference>
<dbReference type="PANTHER" id="PTHR23132">
    <property type="entry name" value="D-ALANINE--D-ALANINE LIGASE"/>
    <property type="match status" value="1"/>
</dbReference>
<dbReference type="PANTHER" id="PTHR23132:SF23">
    <property type="entry name" value="D-ALANINE--D-ALANINE LIGASE B"/>
    <property type="match status" value="1"/>
</dbReference>
<dbReference type="Pfam" id="PF07478">
    <property type="entry name" value="Dala_Dala_lig_C"/>
    <property type="match status" value="1"/>
</dbReference>
<dbReference type="Pfam" id="PF01820">
    <property type="entry name" value="Dala_Dala_lig_N"/>
    <property type="match status" value="1"/>
</dbReference>
<dbReference type="PIRSF" id="PIRSF039102">
    <property type="entry name" value="Ddl/VanB"/>
    <property type="match status" value="1"/>
</dbReference>
<dbReference type="SUPFAM" id="SSF56059">
    <property type="entry name" value="Glutathione synthetase ATP-binding domain-like"/>
    <property type="match status" value="1"/>
</dbReference>
<dbReference type="SUPFAM" id="SSF52440">
    <property type="entry name" value="PreATP-grasp domain"/>
    <property type="match status" value="1"/>
</dbReference>
<dbReference type="PROSITE" id="PS50975">
    <property type="entry name" value="ATP_GRASP"/>
    <property type="match status" value="1"/>
</dbReference>
<dbReference type="PROSITE" id="PS00843">
    <property type="entry name" value="DALA_DALA_LIGASE_1"/>
    <property type="match status" value="1"/>
</dbReference>
<dbReference type="PROSITE" id="PS00844">
    <property type="entry name" value="DALA_DALA_LIGASE_2"/>
    <property type="match status" value="1"/>
</dbReference>